<accession>O83279</accession>
<sequence length="546" mass="61513">MRIEEWCRSRLGEFLLFVLAVSLFALSHPNPLLPRGCALLAYGALAPLFLLVRWASGFAVVFWGGAYGAFSYGAFSYWLFVFHPVALCVVAGFSALFLAALCLALKAGGAFWQRRALLVQCLVWLGYEYAKTLGFLGFPYGVMGYSQWRVLPLIQVASVFGVWVVSALVVFPSAWLASVLGQWVEESERNARAFLSAAYSHWVSALVWVGLCGFCVCAAKAGWWPDCTAHTRAKVALVQPNGDPRRGGIESYRADFSTLTYLSDWALERYPDVDLVVWPETAFVPRIDWHYRYRHEQQSFQLVCDLLDYVNAKNCPFIIGSDDAYKKRTKEGNWERVDYNAALLFIPGVNVLPPSPQRYHKIKLVPFTEYFPYKRVFPWFYNFLEKQDARFWAQGSEFVVFEARGLKFSVPICFEDAFGYITREFCARGASLLVNISNDSWAKSLSCQYQHLSMAVFRAIENRRALVRASTSGQTVAIAPDGRILDELQPFAPGVLVADVPIVTCACGGYRYWGDALGVFFCVASLFILIAGGVRHMLRCRRGGWR</sequence>
<proteinExistence type="inferred from homology"/>
<organism>
    <name type="scientific">Treponema pallidum (strain Nichols)</name>
    <dbReference type="NCBI Taxonomy" id="243276"/>
    <lineage>
        <taxon>Bacteria</taxon>
        <taxon>Pseudomonadati</taxon>
        <taxon>Spirochaetota</taxon>
        <taxon>Spirochaetia</taxon>
        <taxon>Spirochaetales</taxon>
        <taxon>Treponemataceae</taxon>
        <taxon>Treponema</taxon>
    </lineage>
</organism>
<keyword id="KW-0012">Acyltransferase</keyword>
<keyword id="KW-0997">Cell inner membrane</keyword>
<keyword id="KW-1003">Cell membrane</keyword>
<keyword id="KW-0472">Membrane</keyword>
<keyword id="KW-1185">Reference proteome</keyword>
<keyword id="KW-0808">Transferase</keyword>
<keyword id="KW-0812">Transmembrane</keyword>
<keyword id="KW-1133">Transmembrane helix</keyword>
<feature type="chain" id="PRO_0000178105" description="Apolipoprotein N-acyltransferase 1">
    <location>
        <begin position="1"/>
        <end position="546"/>
    </location>
</feature>
<feature type="transmembrane region" description="Helical" evidence="1">
    <location>
        <begin position="14"/>
        <end position="34"/>
    </location>
</feature>
<feature type="transmembrane region" description="Helical" evidence="1">
    <location>
        <begin position="41"/>
        <end position="61"/>
    </location>
</feature>
<feature type="transmembrane region" description="Helical" evidence="1">
    <location>
        <begin position="62"/>
        <end position="82"/>
    </location>
</feature>
<feature type="transmembrane region" description="Helical" evidence="1">
    <location>
        <begin position="85"/>
        <end position="105"/>
    </location>
</feature>
<feature type="transmembrane region" description="Helical" evidence="1">
    <location>
        <begin position="122"/>
        <end position="142"/>
    </location>
</feature>
<feature type="transmembrane region" description="Helical" evidence="1">
    <location>
        <begin position="151"/>
        <end position="171"/>
    </location>
</feature>
<feature type="transmembrane region" description="Helical" evidence="1">
    <location>
        <begin position="194"/>
        <end position="214"/>
    </location>
</feature>
<feature type="transmembrane region" description="Helical" evidence="1">
    <location>
        <begin position="514"/>
        <end position="534"/>
    </location>
</feature>
<feature type="domain" description="CN hydrolase" evidence="1">
    <location>
        <begin position="233"/>
        <end position="502"/>
    </location>
</feature>
<feature type="active site" description="Proton acceptor" evidence="1">
    <location>
        <position position="280"/>
    </location>
</feature>
<feature type="active site" evidence="1">
    <location>
        <position position="361"/>
    </location>
</feature>
<feature type="active site" description="Nucleophile" evidence="1">
    <location>
        <position position="413"/>
    </location>
</feature>
<comment type="function">
    <text evidence="1">Catalyzes the phospholipid dependent N-acylation of the N-terminal cysteine of apolipoprotein, the last step in lipoprotein maturation.</text>
</comment>
<comment type="catalytic activity">
    <reaction evidence="1">
        <text>N-terminal S-1,2-diacyl-sn-glyceryl-L-cysteinyl-[lipoprotein] + a glycerophospholipid = N-acyl-S-1,2-diacyl-sn-glyceryl-L-cysteinyl-[lipoprotein] + a 2-acyl-sn-glycero-3-phospholipid + H(+)</text>
        <dbReference type="Rhea" id="RHEA:48228"/>
        <dbReference type="Rhea" id="RHEA-COMP:14681"/>
        <dbReference type="Rhea" id="RHEA-COMP:14684"/>
        <dbReference type="ChEBI" id="CHEBI:15378"/>
        <dbReference type="ChEBI" id="CHEBI:136912"/>
        <dbReference type="ChEBI" id="CHEBI:140656"/>
        <dbReference type="ChEBI" id="CHEBI:140657"/>
        <dbReference type="ChEBI" id="CHEBI:140660"/>
        <dbReference type="EC" id="2.3.1.269"/>
    </reaction>
</comment>
<comment type="pathway">
    <text evidence="1">Protein modification; lipoprotein biosynthesis (N-acyl transfer).</text>
</comment>
<comment type="subcellular location">
    <subcellularLocation>
        <location evidence="1">Cell inner membrane</location>
        <topology evidence="1">Multi-pass membrane protein</topology>
    </subcellularLocation>
</comment>
<comment type="similarity">
    <text evidence="1 2">Belongs to the CN hydrolase family. Apolipoprotein N-acyltransferase subfamily.</text>
</comment>
<protein>
    <recommendedName>
        <fullName evidence="1">Apolipoprotein N-acyltransferase 1</fullName>
        <shortName evidence="1">ALP N-acyltransferase 1</shortName>
        <ecNumber evidence="1">2.3.1.269</ecNumber>
    </recommendedName>
</protein>
<reference key="1">
    <citation type="journal article" date="1998" name="Science">
        <title>Complete genome sequence of Treponema pallidum, the syphilis spirochete.</title>
        <authorList>
            <person name="Fraser C.M."/>
            <person name="Norris S.J."/>
            <person name="Weinstock G.M."/>
            <person name="White O."/>
            <person name="Sutton G.G."/>
            <person name="Dodson R.J."/>
            <person name="Gwinn M.L."/>
            <person name="Hickey E.K."/>
            <person name="Clayton R.A."/>
            <person name="Ketchum K.A."/>
            <person name="Sodergren E."/>
            <person name="Hardham J.M."/>
            <person name="McLeod M.P."/>
            <person name="Salzberg S.L."/>
            <person name="Peterson J.D."/>
            <person name="Khalak H.G."/>
            <person name="Richardson D.L."/>
            <person name="Howell J.K."/>
            <person name="Chidambaram M."/>
            <person name="Utterback T.R."/>
            <person name="McDonald L.A."/>
            <person name="Artiach P."/>
            <person name="Bowman C."/>
            <person name="Cotton M.D."/>
            <person name="Fujii C."/>
            <person name="Garland S.A."/>
            <person name="Hatch B."/>
            <person name="Horst K."/>
            <person name="Roberts K.M."/>
            <person name="Sandusky M."/>
            <person name="Weidman J.F."/>
            <person name="Smith H.O."/>
            <person name="Venter J.C."/>
        </authorList>
    </citation>
    <scope>NUCLEOTIDE SEQUENCE [LARGE SCALE GENOMIC DNA]</scope>
    <source>
        <strain>Nichols</strain>
    </source>
</reference>
<gene>
    <name evidence="1" type="primary">lnt1</name>
    <name type="ordered locus">TP_0252</name>
</gene>
<evidence type="ECO:0000255" key="1">
    <source>
        <dbReference type="HAMAP-Rule" id="MF_01148"/>
    </source>
</evidence>
<evidence type="ECO:0000305" key="2"/>
<dbReference type="EC" id="2.3.1.269" evidence="1"/>
<dbReference type="EMBL" id="AE000520">
    <property type="protein sequence ID" value="AAC65237.1"/>
    <property type="molecule type" value="Genomic_DNA"/>
</dbReference>
<dbReference type="PIR" id="G71348">
    <property type="entry name" value="G71348"/>
</dbReference>
<dbReference type="SMR" id="O83279"/>
<dbReference type="IntAct" id="O83279">
    <property type="interactions" value="13"/>
</dbReference>
<dbReference type="STRING" id="243276.TP_0252"/>
<dbReference type="EnsemblBacteria" id="AAC65237">
    <property type="protein sequence ID" value="AAC65237"/>
    <property type="gene ID" value="TP_0252"/>
</dbReference>
<dbReference type="KEGG" id="tpa:TP_0252"/>
<dbReference type="KEGG" id="tpw:TPANIC_0252"/>
<dbReference type="eggNOG" id="COG0815">
    <property type="taxonomic scope" value="Bacteria"/>
</dbReference>
<dbReference type="HOGENOM" id="CLU_019563_1_1_12"/>
<dbReference type="OrthoDB" id="9811121at2"/>
<dbReference type="UniPathway" id="UPA00666"/>
<dbReference type="Proteomes" id="UP000000811">
    <property type="component" value="Chromosome"/>
</dbReference>
<dbReference type="GO" id="GO:0005886">
    <property type="term" value="C:plasma membrane"/>
    <property type="evidence" value="ECO:0007669"/>
    <property type="project" value="UniProtKB-SubCell"/>
</dbReference>
<dbReference type="GO" id="GO:0016410">
    <property type="term" value="F:N-acyltransferase activity"/>
    <property type="evidence" value="ECO:0007669"/>
    <property type="project" value="UniProtKB-UniRule"/>
</dbReference>
<dbReference type="GO" id="GO:0042158">
    <property type="term" value="P:lipoprotein biosynthetic process"/>
    <property type="evidence" value="ECO:0007669"/>
    <property type="project" value="UniProtKB-UniRule"/>
</dbReference>
<dbReference type="CDD" id="cd07571">
    <property type="entry name" value="ALP_N-acyl_transferase"/>
    <property type="match status" value="1"/>
</dbReference>
<dbReference type="Gene3D" id="3.60.110.10">
    <property type="entry name" value="Carbon-nitrogen hydrolase"/>
    <property type="match status" value="1"/>
</dbReference>
<dbReference type="HAMAP" id="MF_01148">
    <property type="entry name" value="Lnt"/>
    <property type="match status" value="1"/>
</dbReference>
<dbReference type="InterPro" id="IPR004563">
    <property type="entry name" value="Apolipo_AcylTrfase"/>
</dbReference>
<dbReference type="InterPro" id="IPR003010">
    <property type="entry name" value="C-N_Hydrolase"/>
</dbReference>
<dbReference type="InterPro" id="IPR036526">
    <property type="entry name" value="C-N_Hydrolase_sf"/>
</dbReference>
<dbReference type="InterPro" id="IPR045378">
    <property type="entry name" value="LNT_N"/>
</dbReference>
<dbReference type="NCBIfam" id="TIGR00546">
    <property type="entry name" value="lnt"/>
    <property type="match status" value="1"/>
</dbReference>
<dbReference type="PANTHER" id="PTHR38686">
    <property type="entry name" value="APOLIPOPROTEIN N-ACYLTRANSFERASE"/>
    <property type="match status" value="1"/>
</dbReference>
<dbReference type="PANTHER" id="PTHR38686:SF1">
    <property type="entry name" value="APOLIPOPROTEIN N-ACYLTRANSFERASE"/>
    <property type="match status" value="1"/>
</dbReference>
<dbReference type="Pfam" id="PF00795">
    <property type="entry name" value="CN_hydrolase"/>
    <property type="match status" value="1"/>
</dbReference>
<dbReference type="Pfam" id="PF20154">
    <property type="entry name" value="LNT_N"/>
    <property type="match status" value="1"/>
</dbReference>
<dbReference type="SUPFAM" id="SSF56317">
    <property type="entry name" value="Carbon-nitrogen hydrolase"/>
    <property type="match status" value="1"/>
</dbReference>
<dbReference type="PROSITE" id="PS50263">
    <property type="entry name" value="CN_HYDROLASE"/>
    <property type="match status" value="1"/>
</dbReference>
<name>LNT1_TREPA</name>